<proteinExistence type="inferred from homology"/>
<evidence type="ECO:0000255" key="1">
    <source>
        <dbReference type="HAMAP-Rule" id="MF_00052"/>
    </source>
</evidence>
<evidence type="ECO:0000255" key="2">
    <source>
        <dbReference type="PROSITE-ProRule" id="PRU01319"/>
    </source>
</evidence>
<organism>
    <name type="scientific">Bordetella pertussis (strain Tohama I / ATCC BAA-589 / NCTC 13251)</name>
    <dbReference type="NCBI Taxonomy" id="257313"/>
    <lineage>
        <taxon>Bacteria</taxon>
        <taxon>Pseudomonadati</taxon>
        <taxon>Pseudomonadota</taxon>
        <taxon>Betaproteobacteria</taxon>
        <taxon>Burkholderiales</taxon>
        <taxon>Alcaligenaceae</taxon>
        <taxon>Bordetella</taxon>
    </lineage>
</organism>
<gene>
    <name evidence="1" type="primary">rnhB</name>
    <name type="ordered locus">BP1433</name>
</gene>
<name>RNH2_BORPE</name>
<keyword id="KW-0963">Cytoplasm</keyword>
<keyword id="KW-0255">Endonuclease</keyword>
<keyword id="KW-0378">Hydrolase</keyword>
<keyword id="KW-0464">Manganese</keyword>
<keyword id="KW-0479">Metal-binding</keyword>
<keyword id="KW-0540">Nuclease</keyword>
<keyword id="KW-1185">Reference proteome</keyword>
<comment type="function">
    <text evidence="1">Endonuclease that specifically degrades the RNA of RNA-DNA hybrids.</text>
</comment>
<comment type="catalytic activity">
    <reaction evidence="1">
        <text>Endonucleolytic cleavage to 5'-phosphomonoester.</text>
        <dbReference type="EC" id="3.1.26.4"/>
    </reaction>
</comment>
<comment type="cofactor">
    <cofactor evidence="1">
        <name>Mn(2+)</name>
        <dbReference type="ChEBI" id="CHEBI:29035"/>
    </cofactor>
    <cofactor evidence="1">
        <name>Mg(2+)</name>
        <dbReference type="ChEBI" id="CHEBI:18420"/>
    </cofactor>
    <text evidence="1">Manganese or magnesium. Binds 1 divalent metal ion per monomer in the absence of substrate. May bind a second metal ion after substrate binding.</text>
</comment>
<comment type="subcellular location">
    <subcellularLocation>
        <location evidence="1">Cytoplasm</location>
    </subcellularLocation>
</comment>
<comment type="similarity">
    <text evidence="1">Belongs to the RNase HII family.</text>
</comment>
<feature type="chain" id="PRO_0000111548" description="Ribonuclease HII">
    <location>
        <begin position="1"/>
        <end position="201"/>
    </location>
</feature>
<feature type="domain" description="RNase H type-2" evidence="2">
    <location>
        <begin position="15"/>
        <end position="201"/>
    </location>
</feature>
<feature type="binding site" evidence="1">
    <location>
        <position position="21"/>
    </location>
    <ligand>
        <name>a divalent metal cation</name>
        <dbReference type="ChEBI" id="CHEBI:60240"/>
    </ligand>
</feature>
<feature type="binding site" evidence="1">
    <location>
        <position position="22"/>
    </location>
    <ligand>
        <name>a divalent metal cation</name>
        <dbReference type="ChEBI" id="CHEBI:60240"/>
    </ligand>
</feature>
<feature type="binding site" evidence="1">
    <location>
        <position position="113"/>
    </location>
    <ligand>
        <name>a divalent metal cation</name>
        <dbReference type="ChEBI" id="CHEBI:60240"/>
    </ligand>
</feature>
<sequence length="201" mass="21275">MEQPDLFGTLAPLPAIIAGVDEAGRGPLAGAVYAAAVILDPDRPVDGLADSKVLKAEQREALAVQIRAQALAWFVASASVQEIDSLNILRATMLAMQRAVAGLAMAPELAMVDGNQAPKLRCAVQTVIKGDALVPAISAASILAKTARDADLLRLHALYPQYGFDQHKGYGTPQHLSLLREHGPCPEHRRSFAPIKAYGAP</sequence>
<accession>Q7VYB6</accession>
<reference key="1">
    <citation type="journal article" date="2003" name="Nat. Genet.">
        <title>Comparative analysis of the genome sequences of Bordetella pertussis, Bordetella parapertussis and Bordetella bronchiseptica.</title>
        <authorList>
            <person name="Parkhill J."/>
            <person name="Sebaihia M."/>
            <person name="Preston A."/>
            <person name="Murphy L.D."/>
            <person name="Thomson N.R."/>
            <person name="Harris D.E."/>
            <person name="Holden M.T.G."/>
            <person name="Churcher C.M."/>
            <person name="Bentley S.D."/>
            <person name="Mungall K.L."/>
            <person name="Cerdeno-Tarraga A.-M."/>
            <person name="Temple L."/>
            <person name="James K.D."/>
            <person name="Harris B."/>
            <person name="Quail M.A."/>
            <person name="Achtman M."/>
            <person name="Atkin R."/>
            <person name="Baker S."/>
            <person name="Basham D."/>
            <person name="Bason N."/>
            <person name="Cherevach I."/>
            <person name="Chillingworth T."/>
            <person name="Collins M."/>
            <person name="Cronin A."/>
            <person name="Davis P."/>
            <person name="Doggett J."/>
            <person name="Feltwell T."/>
            <person name="Goble A."/>
            <person name="Hamlin N."/>
            <person name="Hauser H."/>
            <person name="Holroyd S."/>
            <person name="Jagels K."/>
            <person name="Leather S."/>
            <person name="Moule S."/>
            <person name="Norberczak H."/>
            <person name="O'Neil S."/>
            <person name="Ormond D."/>
            <person name="Price C."/>
            <person name="Rabbinowitsch E."/>
            <person name="Rutter S."/>
            <person name="Sanders M."/>
            <person name="Saunders D."/>
            <person name="Seeger K."/>
            <person name="Sharp S."/>
            <person name="Simmonds M."/>
            <person name="Skelton J."/>
            <person name="Squares R."/>
            <person name="Squares S."/>
            <person name="Stevens K."/>
            <person name="Unwin L."/>
            <person name="Whitehead S."/>
            <person name="Barrell B.G."/>
            <person name="Maskell D.J."/>
        </authorList>
    </citation>
    <scope>NUCLEOTIDE SEQUENCE [LARGE SCALE GENOMIC DNA]</scope>
    <source>
        <strain>Tohama I / ATCC BAA-589 / NCTC 13251</strain>
    </source>
</reference>
<protein>
    <recommendedName>
        <fullName evidence="1">Ribonuclease HII</fullName>
        <shortName evidence="1">RNase HII</shortName>
        <ecNumber evidence="1">3.1.26.4</ecNumber>
    </recommendedName>
</protein>
<dbReference type="EC" id="3.1.26.4" evidence="1"/>
<dbReference type="EMBL" id="BX640415">
    <property type="protein sequence ID" value="CAE41723.1"/>
    <property type="molecule type" value="Genomic_DNA"/>
</dbReference>
<dbReference type="RefSeq" id="NP_880175.1">
    <property type="nucleotide sequence ID" value="NC_002929.2"/>
</dbReference>
<dbReference type="RefSeq" id="WP_003811770.1">
    <property type="nucleotide sequence ID" value="NZ_CP039022.1"/>
</dbReference>
<dbReference type="SMR" id="Q7VYB6"/>
<dbReference type="STRING" id="257313.BP1433"/>
<dbReference type="PaxDb" id="257313-BP1433"/>
<dbReference type="GeneID" id="93203300"/>
<dbReference type="KEGG" id="bpe:BP1433"/>
<dbReference type="PATRIC" id="fig|257313.5.peg.1536"/>
<dbReference type="eggNOG" id="COG0164">
    <property type="taxonomic scope" value="Bacteria"/>
</dbReference>
<dbReference type="HOGENOM" id="CLU_036532_3_2_4"/>
<dbReference type="Proteomes" id="UP000002676">
    <property type="component" value="Chromosome"/>
</dbReference>
<dbReference type="GO" id="GO:0005737">
    <property type="term" value="C:cytoplasm"/>
    <property type="evidence" value="ECO:0007669"/>
    <property type="project" value="UniProtKB-SubCell"/>
</dbReference>
<dbReference type="GO" id="GO:0032299">
    <property type="term" value="C:ribonuclease H2 complex"/>
    <property type="evidence" value="ECO:0007669"/>
    <property type="project" value="TreeGrafter"/>
</dbReference>
<dbReference type="GO" id="GO:0030145">
    <property type="term" value="F:manganese ion binding"/>
    <property type="evidence" value="ECO:0007669"/>
    <property type="project" value="UniProtKB-UniRule"/>
</dbReference>
<dbReference type="GO" id="GO:0003723">
    <property type="term" value="F:RNA binding"/>
    <property type="evidence" value="ECO:0007669"/>
    <property type="project" value="InterPro"/>
</dbReference>
<dbReference type="GO" id="GO:0004523">
    <property type="term" value="F:RNA-DNA hybrid ribonuclease activity"/>
    <property type="evidence" value="ECO:0007669"/>
    <property type="project" value="UniProtKB-UniRule"/>
</dbReference>
<dbReference type="GO" id="GO:0043137">
    <property type="term" value="P:DNA replication, removal of RNA primer"/>
    <property type="evidence" value="ECO:0007669"/>
    <property type="project" value="TreeGrafter"/>
</dbReference>
<dbReference type="GO" id="GO:0006298">
    <property type="term" value="P:mismatch repair"/>
    <property type="evidence" value="ECO:0007669"/>
    <property type="project" value="TreeGrafter"/>
</dbReference>
<dbReference type="CDD" id="cd07182">
    <property type="entry name" value="RNase_HII_bacteria_HII_like"/>
    <property type="match status" value="1"/>
</dbReference>
<dbReference type="FunFam" id="3.30.420.10:FF:000006">
    <property type="entry name" value="Ribonuclease HII"/>
    <property type="match status" value="1"/>
</dbReference>
<dbReference type="Gene3D" id="3.30.420.10">
    <property type="entry name" value="Ribonuclease H-like superfamily/Ribonuclease H"/>
    <property type="match status" value="1"/>
</dbReference>
<dbReference type="HAMAP" id="MF_00052_B">
    <property type="entry name" value="RNase_HII_B"/>
    <property type="match status" value="1"/>
</dbReference>
<dbReference type="InterPro" id="IPR022898">
    <property type="entry name" value="RNase_HII"/>
</dbReference>
<dbReference type="InterPro" id="IPR001352">
    <property type="entry name" value="RNase_HII/HIII"/>
</dbReference>
<dbReference type="InterPro" id="IPR024567">
    <property type="entry name" value="RNase_HII/HIII_dom"/>
</dbReference>
<dbReference type="InterPro" id="IPR012337">
    <property type="entry name" value="RNaseH-like_sf"/>
</dbReference>
<dbReference type="InterPro" id="IPR036397">
    <property type="entry name" value="RNaseH_sf"/>
</dbReference>
<dbReference type="NCBIfam" id="NF000595">
    <property type="entry name" value="PRK00015.1-3"/>
    <property type="match status" value="1"/>
</dbReference>
<dbReference type="NCBIfam" id="NF000596">
    <property type="entry name" value="PRK00015.1-4"/>
    <property type="match status" value="1"/>
</dbReference>
<dbReference type="PANTHER" id="PTHR10954">
    <property type="entry name" value="RIBONUCLEASE H2 SUBUNIT A"/>
    <property type="match status" value="1"/>
</dbReference>
<dbReference type="PANTHER" id="PTHR10954:SF18">
    <property type="entry name" value="RIBONUCLEASE HII"/>
    <property type="match status" value="1"/>
</dbReference>
<dbReference type="Pfam" id="PF01351">
    <property type="entry name" value="RNase_HII"/>
    <property type="match status" value="1"/>
</dbReference>
<dbReference type="SUPFAM" id="SSF53098">
    <property type="entry name" value="Ribonuclease H-like"/>
    <property type="match status" value="1"/>
</dbReference>
<dbReference type="PROSITE" id="PS51975">
    <property type="entry name" value="RNASE_H_2"/>
    <property type="match status" value="1"/>
</dbReference>